<accession>Q2ISY9</accession>
<name>BCHL_RHOP2</name>
<sequence length="312" mass="33782">MNILTDPLKLKTSGCADANASKCAEGDGEGSVQVQLDPNVKIGSAKVFSIYGKGGIGKSTTSSNLSVAFSKLGKRVLQIGCDPKHDSTFTLTKRLIPTVIDVLEEVNFHSEELRPEDFVFEGYNGVMCLEAGGPPAGTGCGGYVVGQTVKLLKEHHLLEDTDVVIFDVLGDVVCGGFAAPLQHSERAMIVAANDFDSIFAANRIAAAIQAKSKNYGVRLAGIIANRSRETDQIDKFGAATGIQRVAHLPDLDVIRKSRLKKMTLFEMDHTDEILAVQQEYLRLATEMWEAKTPPVQGKPLKDRDIFDLLGFD</sequence>
<dbReference type="EC" id="1.3.7.7" evidence="1"/>
<dbReference type="EMBL" id="CP000250">
    <property type="protein sequence ID" value="ABD08671.1"/>
    <property type="molecule type" value="Genomic_DNA"/>
</dbReference>
<dbReference type="RefSeq" id="WP_011442855.1">
    <property type="nucleotide sequence ID" value="NC_007778.1"/>
</dbReference>
<dbReference type="SMR" id="Q2ISY9"/>
<dbReference type="STRING" id="316058.RPB_3978"/>
<dbReference type="KEGG" id="rpb:RPB_3978"/>
<dbReference type="eggNOG" id="COG1348">
    <property type="taxonomic scope" value="Bacteria"/>
</dbReference>
<dbReference type="HOGENOM" id="CLU_059373_2_0_5"/>
<dbReference type="OrthoDB" id="9778641at2"/>
<dbReference type="UniPathway" id="UPA00671"/>
<dbReference type="Proteomes" id="UP000008809">
    <property type="component" value="Chromosome"/>
</dbReference>
<dbReference type="GO" id="GO:0051539">
    <property type="term" value="F:4 iron, 4 sulfur cluster binding"/>
    <property type="evidence" value="ECO:0007669"/>
    <property type="project" value="UniProtKB-UniRule"/>
</dbReference>
<dbReference type="GO" id="GO:0005524">
    <property type="term" value="F:ATP binding"/>
    <property type="evidence" value="ECO:0007669"/>
    <property type="project" value="UniProtKB-UniRule"/>
</dbReference>
<dbReference type="GO" id="GO:0046872">
    <property type="term" value="F:metal ion binding"/>
    <property type="evidence" value="ECO:0007669"/>
    <property type="project" value="UniProtKB-KW"/>
</dbReference>
<dbReference type="GO" id="GO:0016730">
    <property type="term" value="F:oxidoreductase activity, acting on iron-sulfur proteins as donors"/>
    <property type="evidence" value="ECO:0007669"/>
    <property type="project" value="InterPro"/>
</dbReference>
<dbReference type="GO" id="GO:0016636">
    <property type="term" value="F:oxidoreductase activity, acting on the CH-CH group of donors, iron-sulfur protein as acceptor"/>
    <property type="evidence" value="ECO:0007669"/>
    <property type="project" value="UniProtKB-UniRule"/>
</dbReference>
<dbReference type="GO" id="GO:0036070">
    <property type="term" value="P:light-independent bacteriochlorophyll biosynthetic process"/>
    <property type="evidence" value="ECO:0007669"/>
    <property type="project" value="UniProtKB-UniRule"/>
</dbReference>
<dbReference type="GO" id="GO:0019685">
    <property type="term" value="P:photosynthesis, dark reaction"/>
    <property type="evidence" value="ECO:0007669"/>
    <property type="project" value="InterPro"/>
</dbReference>
<dbReference type="CDD" id="cd02032">
    <property type="entry name" value="Bchl-like"/>
    <property type="match status" value="1"/>
</dbReference>
<dbReference type="Gene3D" id="3.40.50.300">
    <property type="entry name" value="P-loop containing nucleotide triphosphate hydrolases"/>
    <property type="match status" value="1"/>
</dbReference>
<dbReference type="HAMAP" id="MF_00355">
    <property type="entry name" value="ChlL_BchL"/>
    <property type="match status" value="1"/>
</dbReference>
<dbReference type="InterPro" id="IPR030655">
    <property type="entry name" value="NifH/chlL_CS"/>
</dbReference>
<dbReference type="InterPro" id="IPR000392">
    <property type="entry name" value="NifH/frxC"/>
</dbReference>
<dbReference type="InterPro" id="IPR027417">
    <property type="entry name" value="P-loop_NTPase"/>
</dbReference>
<dbReference type="InterPro" id="IPR005971">
    <property type="entry name" value="Protochlorophyllide_ATP-bd"/>
</dbReference>
<dbReference type="NCBIfam" id="TIGR01281">
    <property type="entry name" value="DPOR_bchL"/>
    <property type="match status" value="1"/>
</dbReference>
<dbReference type="PANTHER" id="PTHR42864">
    <property type="entry name" value="LIGHT-INDEPENDENT PROTOCHLOROPHYLLIDE REDUCTASE IRON-SULFUR ATP-BINDING PROTEIN"/>
    <property type="match status" value="1"/>
</dbReference>
<dbReference type="PANTHER" id="PTHR42864:SF2">
    <property type="entry name" value="LIGHT-INDEPENDENT PROTOCHLOROPHYLLIDE REDUCTASE IRON-SULFUR ATP-BINDING PROTEIN"/>
    <property type="match status" value="1"/>
</dbReference>
<dbReference type="Pfam" id="PF00142">
    <property type="entry name" value="Fer4_NifH"/>
    <property type="match status" value="1"/>
</dbReference>
<dbReference type="PIRSF" id="PIRSF000363">
    <property type="entry name" value="Nitrogenase_iron"/>
    <property type="match status" value="1"/>
</dbReference>
<dbReference type="PRINTS" id="PR00091">
    <property type="entry name" value="NITROGNASEII"/>
</dbReference>
<dbReference type="SUPFAM" id="SSF52540">
    <property type="entry name" value="P-loop containing nucleoside triphosphate hydrolases"/>
    <property type="match status" value="1"/>
</dbReference>
<dbReference type="PROSITE" id="PS00746">
    <property type="entry name" value="NIFH_FRXC_1"/>
    <property type="match status" value="1"/>
</dbReference>
<dbReference type="PROSITE" id="PS00692">
    <property type="entry name" value="NIFH_FRXC_2"/>
    <property type="match status" value="1"/>
</dbReference>
<dbReference type="PROSITE" id="PS51026">
    <property type="entry name" value="NIFH_FRXC_3"/>
    <property type="match status" value="1"/>
</dbReference>
<reference key="1">
    <citation type="submission" date="2006-01" db="EMBL/GenBank/DDBJ databases">
        <title>Complete sequence of Rhodopseudomonas palustris HaA2.</title>
        <authorList>
            <consortium name="US DOE Joint Genome Institute"/>
            <person name="Copeland A."/>
            <person name="Lucas S."/>
            <person name="Lapidus A."/>
            <person name="Barry K."/>
            <person name="Detter J.C."/>
            <person name="Glavina T."/>
            <person name="Hammon N."/>
            <person name="Israni S."/>
            <person name="Pitluck S."/>
            <person name="Chain P."/>
            <person name="Malfatti S."/>
            <person name="Shin M."/>
            <person name="Vergez L."/>
            <person name="Schmutz J."/>
            <person name="Larimer F."/>
            <person name="Land M."/>
            <person name="Hauser L."/>
            <person name="Pelletier D.A."/>
            <person name="Kyrpides N."/>
            <person name="Anderson I."/>
            <person name="Oda Y."/>
            <person name="Harwood C.S."/>
            <person name="Richardson P."/>
        </authorList>
    </citation>
    <scope>NUCLEOTIDE SEQUENCE [LARGE SCALE GENOMIC DNA]</scope>
    <source>
        <strain>HaA2</strain>
    </source>
</reference>
<feature type="chain" id="PRO_0000324072" description="Light-independent protochlorophyllide reductase iron-sulfur ATP-binding protein">
    <location>
        <begin position="1"/>
        <end position="312"/>
    </location>
</feature>
<feature type="binding site" evidence="1">
    <location>
        <begin position="55"/>
        <end position="60"/>
    </location>
    <ligand>
        <name>ATP</name>
        <dbReference type="ChEBI" id="CHEBI:30616"/>
    </ligand>
</feature>
<feature type="binding site" evidence="1">
    <location>
        <position position="59"/>
    </location>
    <ligand>
        <name>Mg(2+)</name>
        <dbReference type="ChEBI" id="CHEBI:18420"/>
    </ligand>
</feature>
<feature type="binding site" evidence="1">
    <location>
        <position position="84"/>
    </location>
    <ligand>
        <name>ATP</name>
        <dbReference type="ChEBI" id="CHEBI:30616"/>
    </ligand>
</feature>
<feature type="binding site" evidence="1">
    <location>
        <position position="140"/>
    </location>
    <ligand>
        <name>[4Fe-4S] cluster</name>
        <dbReference type="ChEBI" id="CHEBI:49883"/>
        <note>ligand shared between dimeric partners</note>
    </ligand>
</feature>
<feature type="binding site" evidence="1">
    <location>
        <position position="174"/>
    </location>
    <ligand>
        <name>[4Fe-4S] cluster</name>
        <dbReference type="ChEBI" id="CHEBI:49883"/>
        <note>ligand shared between dimeric partners</note>
    </ligand>
</feature>
<feature type="binding site" evidence="1">
    <location>
        <begin position="225"/>
        <end position="226"/>
    </location>
    <ligand>
        <name>ATP</name>
        <dbReference type="ChEBI" id="CHEBI:30616"/>
    </ligand>
</feature>
<feature type="binding site" evidence="1">
    <location>
        <begin position="249"/>
        <end position="251"/>
    </location>
    <ligand>
        <name>ATP</name>
        <dbReference type="ChEBI" id="CHEBI:30616"/>
    </ligand>
</feature>
<gene>
    <name evidence="1" type="primary">bchL</name>
    <name type="ordered locus">RPB_3978</name>
</gene>
<keyword id="KW-0004">4Fe-4S</keyword>
<keyword id="KW-0067">ATP-binding</keyword>
<keyword id="KW-0077">Bacteriochlorophyll biosynthesis</keyword>
<keyword id="KW-0149">Chlorophyll biosynthesis</keyword>
<keyword id="KW-0408">Iron</keyword>
<keyword id="KW-0411">Iron-sulfur</keyword>
<keyword id="KW-0460">Magnesium</keyword>
<keyword id="KW-0479">Metal-binding</keyword>
<keyword id="KW-0547">Nucleotide-binding</keyword>
<keyword id="KW-0560">Oxidoreductase</keyword>
<keyword id="KW-0602">Photosynthesis</keyword>
<keyword id="KW-1185">Reference proteome</keyword>
<comment type="function">
    <text evidence="1">Component of the dark-operative protochlorophyllide reductase (DPOR) that uses Mg-ATP and reduced ferredoxin to reduce ring D of protochlorophyllide (Pchlide) to form chlorophyllide a (Chlide). This reaction is light-independent. The L component serves as a unique electron donor to the NB-component of the complex, and binds Mg-ATP.</text>
</comment>
<comment type="catalytic activity">
    <reaction evidence="1">
        <text>chlorophyllide a + oxidized 2[4Fe-4S]-[ferredoxin] + 2 ADP + 2 phosphate = protochlorophyllide a + reduced 2[4Fe-4S]-[ferredoxin] + 2 ATP + 2 H2O</text>
        <dbReference type="Rhea" id="RHEA:28202"/>
        <dbReference type="Rhea" id="RHEA-COMP:10002"/>
        <dbReference type="Rhea" id="RHEA-COMP:10004"/>
        <dbReference type="ChEBI" id="CHEBI:15377"/>
        <dbReference type="ChEBI" id="CHEBI:30616"/>
        <dbReference type="ChEBI" id="CHEBI:33722"/>
        <dbReference type="ChEBI" id="CHEBI:33723"/>
        <dbReference type="ChEBI" id="CHEBI:43474"/>
        <dbReference type="ChEBI" id="CHEBI:83348"/>
        <dbReference type="ChEBI" id="CHEBI:83350"/>
        <dbReference type="ChEBI" id="CHEBI:456216"/>
        <dbReference type="EC" id="1.3.7.7"/>
    </reaction>
</comment>
<comment type="cofactor">
    <cofactor evidence="1">
        <name>[4Fe-4S] cluster</name>
        <dbReference type="ChEBI" id="CHEBI:49883"/>
    </cofactor>
    <text evidence="1">Binds 1 [4Fe-4S] cluster per dimer.</text>
</comment>
<comment type="pathway">
    <text evidence="1">Porphyrin-containing compound metabolism; bacteriochlorophyll biosynthesis (light-independent).</text>
</comment>
<comment type="subunit">
    <text evidence="1">Homodimer. Protochlorophyllide reductase is composed of three subunits; BchL, BchN and BchB.</text>
</comment>
<comment type="similarity">
    <text evidence="1">Belongs to the NifH/BchL/ChlL family.</text>
</comment>
<organism>
    <name type="scientific">Rhodopseudomonas palustris (strain HaA2)</name>
    <dbReference type="NCBI Taxonomy" id="316058"/>
    <lineage>
        <taxon>Bacteria</taxon>
        <taxon>Pseudomonadati</taxon>
        <taxon>Pseudomonadota</taxon>
        <taxon>Alphaproteobacteria</taxon>
        <taxon>Hyphomicrobiales</taxon>
        <taxon>Nitrobacteraceae</taxon>
        <taxon>Rhodopseudomonas</taxon>
    </lineage>
</organism>
<protein>
    <recommendedName>
        <fullName evidence="1">Light-independent protochlorophyllide reductase iron-sulfur ATP-binding protein</fullName>
        <shortName evidence="1">DPOR subunit L</shortName>
        <shortName evidence="1">LI-POR subunit L</shortName>
        <ecNumber evidence="1">1.3.7.7</ecNumber>
    </recommendedName>
</protein>
<evidence type="ECO:0000255" key="1">
    <source>
        <dbReference type="HAMAP-Rule" id="MF_00355"/>
    </source>
</evidence>
<proteinExistence type="inferred from homology"/>